<reference key="1">
    <citation type="journal article" date="2009" name="J. Bacteriol.">
        <title>Complete genome sequence of the extremophilic Bacillus cereus strain Q1 with industrial applications.</title>
        <authorList>
            <person name="Xiong Z."/>
            <person name="Jiang Y."/>
            <person name="Qi D."/>
            <person name="Lu H."/>
            <person name="Yang F."/>
            <person name="Yang J."/>
            <person name="Chen L."/>
            <person name="Sun L."/>
            <person name="Xu X."/>
            <person name="Xue Y."/>
            <person name="Zhu Y."/>
            <person name="Jin Q."/>
        </authorList>
    </citation>
    <scope>NUCLEOTIDE SEQUENCE [LARGE SCALE GENOMIC DNA]</scope>
    <source>
        <strain>Q1</strain>
    </source>
</reference>
<proteinExistence type="inferred from homology"/>
<dbReference type="EC" id="6.1.1.16" evidence="1"/>
<dbReference type="EMBL" id="CP000227">
    <property type="protein sequence ID" value="ACM10618.1"/>
    <property type="molecule type" value="Genomic_DNA"/>
</dbReference>
<dbReference type="SMR" id="B9IZH4"/>
<dbReference type="KEGG" id="bcq:BCQ_0103"/>
<dbReference type="HOGENOM" id="CLU_013528_0_1_9"/>
<dbReference type="Proteomes" id="UP000000441">
    <property type="component" value="Chromosome"/>
</dbReference>
<dbReference type="GO" id="GO:0005829">
    <property type="term" value="C:cytosol"/>
    <property type="evidence" value="ECO:0007669"/>
    <property type="project" value="TreeGrafter"/>
</dbReference>
<dbReference type="GO" id="GO:0005524">
    <property type="term" value="F:ATP binding"/>
    <property type="evidence" value="ECO:0007669"/>
    <property type="project" value="UniProtKB-UniRule"/>
</dbReference>
<dbReference type="GO" id="GO:0004817">
    <property type="term" value="F:cysteine-tRNA ligase activity"/>
    <property type="evidence" value="ECO:0007669"/>
    <property type="project" value="UniProtKB-UniRule"/>
</dbReference>
<dbReference type="GO" id="GO:0008270">
    <property type="term" value="F:zinc ion binding"/>
    <property type="evidence" value="ECO:0007669"/>
    <property type="project" value="UniProtKB-UniRule"/>
</dbReference>
<dbReference type="GO" id="GO:0006423">
    <property type="term" value="P:cysteinyl-tRNA aminoacylation"/>
    <property type="evidence" value="ECO:0007669"/>
    <property type="project" value="UniProtKB-UniRule"/>
</dbReference>
<dbReference type="CDD" id="cd00672">
    <property type="entry name" value="CysRS_core"/>
    <property type="match status" value="1"/>
</dbReference>
<dbReference type="FunFam" id="1.20.120.1910:FF:000002">
    <property type="entry name" value="Cysteine--tRNA ligase"/>
    <property type="match status" value="1"/>
</dbReference>
<dbReference type="FunFam" id="3.40.50.620:FF:000009">
    <property type="entry name" value="Cysteine--tRNA ligase"/>
    <property type="match status" value="1"/>
</dbReference>
<dbReference type="Gene3D" id="1.20.120.1910">
    <property type="entry name" value="Cysteine-tRNA ligase, C-terminal anti-codon recognition domain"/>
    <property type="match status" value="1"/>
</dbReference>
<dbReference type="Gene3D" id="3.40.50.620">
    <property type="entry name" value="HUPs"/>
    <property type="match status" value="1"/>
</dbReference>
<dbReference type="HAMAP" id="MF_00041">
    <property type="entry name" value="Cys_tRNA_synth"/>
    <property type="match status" value="1"/>
</dbReference>
<dbReference type="InterPro" id="IPR015803">
    <property type="entry name" value="Cys-tRNA-ligase"/>
</dbReference>
<dbReference type="InterPro" id="IPR015273">
    <property type="entry name" value="Cys-tRNA-synt_Ia_DALR"/>
</dbReference>
<dbReference type="InterPro" id="IPR024909">
    <property type="entry name" value="Cys-tRNA/MSH_ligase"/>
</dbReference>
<dbReference type="InterPro" id="IPR014729">
    <property type="entry name" value="Rossmann-like_a/b/a_fold"/>
</dbReference>
<dbReference type="InterPro" id="IPR032678">
    <property type="entry name" value="tRNA-synt_1_cat_dom"/>
</dbReference>
<dbReference type="InterPro" id="IPR009080">
    <property type="entry name" value="tRNAsynth_Ia_anticodon-bd"/>
</dbReference>
<dbReference type="NCBIfam" id="TIGR00435">
    <property type="entry name" value="cysS"/>
    <property type="match status" value="1"/>
</dbReference>
<dbReference type="PANTHER" id="PTHR10890:SF3">
    <property type="entry name" value="CYSTEINE--TRNA LIGASE, CYTOPLASMIC"/>
    <property type="match status" value="1"/>
</dbReference>
<dbReference type="PANTHER" id="PTHR10890">
    <property type="entry name" value="CYSTEINYL-TRNA SYNTHETASE"/>
    <property type="match status" value="1"/>
</dbReference>
<dbReference type="Pfam" id="PF09190">
    <property type="entry name" value="DALR_2"/>
    <property type="match status" value="1"/>
</dbReference>
<dbReference type="Pfam" id="PF01406">
    <property type="entry name" value="tRNA-synt_1e"/>
    <property type="match status" value="1"/>
</dbReference>
<dbReference type="PRINTS" id="PR00983">
    <property type="entry name" value="TRNASYNTHCYS"/>
</dbReference>
<dbReference type="SMART" id="SM00840">
    <property type="entry name" value="DALR_2"/>
    <property type="match status" value="1"/>
</dbReference>
<dbReference type="SUPFAM" id="SSF47323">
    <property type="entry name" value="Anticodon-binding domain of a subclass of class I aminoacyl-tRNA synthetases"/>
    <property type="match status" value="1"/>
</dbReference>
<dbReference type="SUPFAM" id="SSF52374">
    <property type="entry name" value="Nucleotidylyl transferase"/>
    <property type="match status" value="1"/>
</dbReference>
<evidence type="ECO:0000255" key="1">
    <source>
        <dbReference type="HAMAP-Rule" id="MF_00041"/>
    </source>
</evidence>
<keyword id="KW-0030">Aminoacyl-tRNA synthetase</keyword>
<keyword id="KW-0067">ATP-binding</keyword>
<keyword id="KW-0963">Cytoplasm</keyword>
<keyword id="KW-0436">Ligase</keyword>
<keyword id="KW-0479">Metal-binding</keyword>
<keyword id="KW-0547">Nucleotide-binding</keyword>
<keyword id="KW-0597">Phosphoprotein</keyword>
<keyword id="KW-0648">Protein biosynthesis</keyword>
<keyword id="KW-0862">Zinc</keyword>
<feature type="chain" id="PRO_1000199041" description="Cysteine--tRNA ligase">
    <location>
        <begin position="1"/>
        <end position="465"/>
    </location>
</feature>
<feature type="short sequence motif" description="'HIGH' region">
    <location>
        <begin position="31"/>
        <end position="41"/>
    </location>
</feature>
<feature type="short sequence motif" description="'KMSKS' region">
    <location>
        <begin position="266"/>
        <end position="270"/>
    </location>
</feature>
<feature type="binding site" evidence="1">
    <location>
        <position position="29"/>
    </location>
    <ligand>
        <name>Zn(2+)</name>
        <dbReference type="ChEBI" id="CHEBI:29105"/>
    </ligand>
</feature>
<feature type="binding site" evidence="1">
    <location>
        <position position="209"/>
    </location>
    <ligand>
        <name>Zn(2+)</name>
        <dbReference type="ChEBI" id="CHEBI:29105"/>
    </ligand>
</feature>
<feature type="binding site" evidence="1">
    <location>
        <position position="234"/>
    </location>
    <ligand>
        <name>Zn(2+)</name>
        <dbReference type="ChEBI" id="CHEBI:29105"/>
    </ligand>
</feature>
<feature type="binding site" evidence="1">
    <location>
        <position position="238"/>
    </location>
    <ligand>
        <name>Zn(2+)</name>
        <dbReference type="ChEBI" id="CHEBI:29105"/>
    </ligand>
</feature>
<feature type="binding site" evidence="1">
    <location>
        <position position="269"/>
    </location>
    <ligand>
        <name>ATP</name>
        <dbReference type="ChEBI" id="CHEBI:30616"/>
    </ligand>
</feature>
<feature type="modified residue" description="Phosphoserine" evidence="1">
    <location>
        <position position="270"/>
    </location>
</feature>
<comment type="catalytic activity">
    <reaction evidence="1">
        <text>tRNA(Cys) + L-cysteine + ATP = L-cysteinyl-tRNA(Cys) + AMP + diphosphate</text>
        <dbReference type="Rhea" id="RHEA:17773"/>
        <dbReference type="Rhea" id="RHEA-COMP:9661"/>
        <dbReference type="Rhea" id="RHEA-COMP:9679"/>
        <dbReference type="ChEBI" id="CHEBI:30616"/>
        <dbReference type="ChEBI" id="CHEBI:33019"/>
        <dbReference type="ChEBI" id="CHEBI:35235"/>
        <dbReference type="ChEBI" id="CHEBI:78442"/>
        <dbReference type="ChEBI" id="CHEBI:78517"/>
        <dbReference type="ChEBI" id="CHEBI:456215"/>
        <dbReference type="EC" id="6.1.1.16"/>
    </reaction>
</comment>
<comment type="cofactor">
    <cofactor evidence="1">
        <name>Zn(2+)</name>
        <dbReference type="ChEBI" id="CHEBI:29105"/>
    </cofactor>
    <text evidence="1">Binds 1 zinc ion per subunit.</text>
</comment>
<comment type="subunit">
    <text evidence="1">Monomer.</text>
</comment>
<comment type="subcellular location">
    <subcellularLocation>
        <location evidence="1">Cytoplasm</location>
    </subcellularLocation>
</comment>
<comment type="similarity">
    <text evidence="1">Belongs to the class-I aminoacyl-tRNA synthetase family.</text>
</comment>
<gene>
    <name evidence="1" type="primary">cysS</name>
    <name type="ordered locus">BCQ_0103</name>
</gene>
<sequence>MTIHIYNTLTRQKEEFIPLEENKVKMYVCGPTVYNYIHIGNARPPMVFDTVRRYLEYKGYDVQYVSNFTDVDDKLIKAANELGEDVPTIADRFVEAYFEDVTALGCKHATVHPRVTENMDIIIEFIQELVNKGYAYESEGDVYFRTKEFEGYGKLSHQPIADLRHGARIEVGEKKQDPLDFALWKAAKEGEIFWESPWGQGRPGWHIECSAMARKYLGDTIDIHAGGQDLAFPHHENEIAQSEALTGKTFARYWMHNGYININNEKMSKSLGNFILVHDIIKQYDPQLIRFFMLSVHYRHPINFSEELLRSTNNGLERIKTAYGNLKHRMESSTDLTDHDEKWLADLKKFQTAFEEAMNDDFNTANAITELYNVANHANQYLLEEHTSTVVIQAYVKQLETLFDILGLELAQEELLDEEIEALIQKRIEARKNRDFALSDQIRDDLKDRNIILEDTAQGTRWKRG</sequence>
<name>SYC_BACCQ</name>
<accession>B9IZH4</accession>
<organism>
    <name type="scientific">Bacillus cereus (strain Q1)</name>
    <dbReference type="NCBI Taxonomy" id="361100"/>
    <lineage>
        <taxon>Bacteria</taxon>
        <taxon>Bacillati</taxon>
        <taxon>Bacillota</taxon>
        <taxon>Bacilli</taxon>
        <taxon>Bacillales</taxon>
        <taxon>Bacillaceae</taxon>
        <taxon>Bacillus</taxon>
        <taxon>Bacillus cereus group</taxon>
    </lineage>
</organism>
<protein>
    <recommendedName>
        <fullName evidence="1">Cysteine--tRNA ligase</fullName>
        <ecNumber evidence="1">6.1.1.16</ecNumber>
    </recommendedName>
    <alternativeName>
        <fullName evidence="1">Cysteinyl-tRNA synthetase</fullName>
        <shortName evidence="1">CysRS</shortName>
    </alternativeName>
</protein>